<protein>
    <recommendedName>
        <fullName>Iota-conotoxin-like R11.11</fullName>
    </recommendedName>
</protein>
<name>I1BV_CONRA</name>
<evidence type="ECO:0000250" key="1"/>
<evidence type="ECO:0000250" key="2">
    <source>
        <dbReference type="UniProtKB" id="Q7Z094"/>
    </source>
</evidence>
<evidence type="ECO:0000305" key="3"/>
<organism>
    <name type="scientific">Conus radiatus</name>
    <name type="common">Rayed cone</name>
    <dbReference type="NCBI Taxonomy" id="61198"/>
    <lineage>
        <taxon>Eukaryota</taxon>
        <taxon>Metazoa</taxon>
        <taxon>Spiralia</taxon>
        <taxon>Lophotrochozoa</taxon>
        <taxon>Mollusca</taxon>
        <taxon>Gastropoda</taxon>
        <taxon>Caenogastropoda</taxon>
        <taxon>Neogastropoda</taxon>
        <taxon>Conoidea</taxon>
        <taxon>Conidae</taxon>
        <taxon>Conus</taxon>
        <taxon>Phasmoconus</taxon>
    </lineage>
</organism>
<accession>Q7Z0A0</accession>
<keyword id="KW-1015">Disulfide bond</keyword>
<keyword id="KW-0872">Ion channel impairing toxin</keyword>
<keyword id="KW-0528">Neurotoxin</keyword>
<keyword id="KW-0964">Secreted</keyword>
<keyword id="KW-0800">Toxin</keyword>
<keyword id="KW-0738">Voltage-gated sodium channel impairing toxin</keyword>
<dbReference type="EMBL" id="AY208953">
    <property type="protein sequence ID" value="AAP41535.1"/>
    <property type="molecule type" value="mRNA"/>
</dbReference>
<dbReference type="ConoServer" id="834">
    <property type="toxin name" value="R11.11"/>
</dbReference>
<dbReference type="GO" id="GO:0005576">
    <property type="term" value="C:extracellular region"/>
    <property type="evidence" value="ECO:0007669"/>
    <property type="project" value="UniProtKB-SubCell"/>
</dbReference>
<dbReference type="GO" id="GO:0017080">
    <property type="term" value="F:sodium channel regulator activity"/>
    <property type="evidence" value="ECO:0007669"/>
    <property type="project" value="UniProtKB-KW"/>
</dbReference>
<dbReference type="GO" id="GO:0090729">
    <property type="term" value="F:toxin activity"/>
    <property type="evidence" value="ECO:0007669"/>
    <property type="project" value="UniProtKB-KW"/>
</dbReference>
<dbReference type="Gene3D" id="4.10.40.80">
    <property type="match status" value="1"/>
</dbReference>
<dbReference type="InterPro" id="IPR013141">
    <property type="entry name" value="Conotoxin-I_CS"/>
</dbReference>
<dbReference type="InterPro" id="IPR012624">
    <property type="entry name" value="Toxin_19"/>
</dbReference>
<dbReference type="Pfam" id="PF08088">
    <property type="entry name" value="Toxin_19"/>
    <property type="match status" value="1"/>
</dbReference>
<dbReference type="PROSITE" id="PS60019">
    <property type="entry name" value="I_CONOTOXIN"/>
    <property type="match status" value="1"/>
</dbReference>
<reference key="1">
    <citation type="journal article" date="2003" name="J. Neurochem.">
        <title>Novel excitatory Conus peptides define a new conotoxin superfamily.</title>
        <authorList>
            <person name="Jimenez E.C."/>
            <person name="Shetty R.P."/>
            <person name="Lirazan M."/>
            <person name="Rivier J."/>
            <person name="Walker C."/>
            <person name="Abogadie F.C."/>
            <person name="Yoshikami D."/>
            <person name="Cruz L.J."/>
            <person name="Olivera B.M."/>
        </authorList>
    </citation>
    <scope>NUCLEOTIDE SEQUENCE [MRNA]</scope>
    <source>
        <tissue>Venom duct</tissue>
    </source>
</reference>
<sequence length="44" mass="4640">GHVSCGKDGRACDYHADCCNCCLGGICKPSTSWIGCSTNVFLTR</sequence>
<proteinExistence type="evidence at transcript level"/>
<feature type="chain" id="PRO_0000035106" description="Iota-conotoxin-like R11.11">
    <location>
        <begin position="1" status="less than"/>
        <end position="43"/>
    </location>
</feature>
<feature type="propeptide" id="PRO_0000035107" description="Removed by a carboxypeptidase" evidence="1">
    <location>
        <position position="44"/>
    </location>
</feature>
<feature type="disulfide bond" evidence="2">
    <location>
        <begin position="5"/>
        <end position="19"/>
    </location>
</feature>
<feature type="disulfide bond" evidence="2">
    <location>
        <begin position="12"/>
        <end position="22"/>
    </location>
</feature>
<feature type="disulfide bond" evidence="2">
    <location>
        <begin position="18"/>
        <end position="27"/>
    </location>
</feature>
<feature type="disulfide bond" evidence="2">
    <location>
        <begin position="21"/>
        <end position="36"/>
    </location>
</feature>
<feature type="non-terminal residue">
    <location>
        <position position="1"/>
    </location>
</feature>
<comment type="function">
    <text evidence="1">Iota-conotoxins bind to voltage-gated sodium channels (Nav) and act as agonists by shifting the voltage-dependence of activation to more hyperpolarized levels. Produces general excitatory symptoms (By similarity).</text>
</comment>
<comment type="subcellular location">
    <subcellularLocation>
        <location evidence="1">Secreted</location>
    </subcellularLocation>
</comment>
<comment type="tissue specificity">
    <text>Expressed by the venom duct.</text>
</comment>
<comment type="domain">
    <text>The cysteine framework is XI (C-C-CC-CC-C-C).</text>
</comment>
<comment type="similarity">
    <text evidence="3">Belongs to the conotoxin I1 superfamily.</text>
</comment>